<reference key="1">
    <citation type="journal article" date="2005" name="Science">
        <title>The transcriptional landscape of the mammalian genome.</title>
        <authorList>
            <person name="Carninci P."/>
            <person name="Kasukawa T."/>
            <person name="Katayama S."/>
            <person name="Gough J."/>
            <person name="Frith M.C."/>
            <person name="Maeda N."/>
            <person name="Oyama R."/>
            <person name="Ravasi T."/>
            <person name="Lenhard B."/>
            <person name="Wells C."/>
            <person name="Kodzius R."/>
            <person name="Shimokawa K."/>
            <person name="Bajic V.B."/>
            <person name="Brenner S.E."/>
            <person name="Batalov S."/>
            <person name="Forrest A.R."/>
            <person name="Zavolan M."/>
            <person name="Davis M.J."/>
            <person name="Wilming L.G."/>
            <person name="Aidinis V."/>
            <person name="Allen J.E."/>
            <person name="Ambesi-Impiombato A."/>
            <person name="Apweiler R."/>
            <person name="Aturaliya R.N."/>
            <person name="Bailey T.L."/>
            <person name="Bansal M."/>
            <person name="Baxter L."/>
            <person name="Beisel K.W."/>
            <person name="Bersano T."/>
            <person name="Bono H."/>
            <person name="Chalk A.M."/>
            <person name="Chiu K.P."/>
            <person name="Choudhary V."/>
            <person name="Christoffels A."/>
            <person name="Clutterbuck D.R."/>
            <person name="Crowe M.L."/>
            <person name="Dalla E."/>
            <person name="Dalrymple B.P."/>
            <person name="de Bono B."/>
            <person name="Della Gatta G."/>
            <person name="di Bernardo D."/>
            <person name="Down T."/>
            <person name="Engstrom P."/>
            <person name="Fagiolini M."/>
            <person name="Faulkner G."/>
            <person name="Fletcher C.F."/>
            <person name="Fukushima T."/>
            <person name="Furuno M."/>
            <person name="Futaki S."/>
            <person name="Gariboldi M."/>
            <person name="Georgii-Hemming P."/>
            <person name="Gingeras T.R."/>
            <person name="Gojobori T."/>
            <person name="Green R.E."/>
            <person name="Gustincich S."/>
            <person name="Harbers M."/>
            <person name="Hayashi Y."/>
            <person name="Hensch T.K."/>
            <person name="Hirokawa N."/>
            <person name="Hill D."/>
            <person name="Huminiecki L."/>
            <person name="Iacono M."/>
            <person name="Ikeo K."/>
            <person name="Iwama A."/>
            <person name="Ishikawa T."/>
            <person name="Jakt M."/>
            <person name="Kanapin A."/>
            <person name="Katoh M."/>
            <person name="Kawasawa Y."/>
            <person name="Kelso J."/>
            <person name="Kitamura H."/>
            <person name="Kitano H."/>
            <person name="Kollias G."/>
            <person name="Krishnan S.P."/>
            <person name="Kruger A."/>
            <person name="Kummerfeld S.K."/>
            <person name="Kurochkin I.V."/>
            <person name="Lareau L.F."/>
            <person name="Lazarevic D."/>
            <person name="Lipovich L."/>
            <person name="Liu J."/>
            <person name="Liuni S."/>
            <person name="McWilliam S."/>
            <person name="Madan Babu M."/>
            <person name="Madera M."/>
            <person name="Marchionni L."/>
            <person name="Matsuda H."/>
            <person name="Matsuzawa S."/>
            <person name="Miki H."/>
            <person name="Mignone F."/>
            <person name="Miyake S."/>
            <person name="Morris K."/>
            <person name="Mottagui-Tabar S."/>
            <person name="Mulder N."/>
            <person name="Nakano N."/>
            <person name="Nakauchi H."/>
            <person name="Ng P."/>
            <person name="Nilsson R."/>
            <person name="Nishiguchi S."/>
            <person name="Nishikawa S."/>
            <person name="Nori F."/>
            <person name="Ohara O."/>
            <person name="Okazaki Y."/>
            <person name="Orlando V."/>
            <person name="Pang K.C."/>
            <person name="Pavan W.J."/>
            <person name="Pavesi G."/>
            <person name="Pesole G."/>
            <person name="Petrovsky N."/>
            <person name="Piazza S."/>
            <person name="Reed J."/>
            <person name="Reid J.F."/>
            <person name="Ring B.Z."/>
            <person name="Ringwald M."/>
            <person name="Rost B."/>
            <person name="Ruan Y."/>
            <person name="Salzberg S.L."/>
            <person name="Sandelin A."/>
            <person name="Schneider C."/>
            <person name="Schoenbach C."/>
            <person name="Sekiguchi K."/>
            <person name="Semple C.A."/>
            <person name="Seno S."/>
            <person name="Sessa L."/>
            <person name="Sheng Y."/>
            <person name="Shibata Y."/>
            <person name="Shimada H."/>
            <person name="Shimada K."/>
            <person name="Silva D."/>
            <person name="Sinclair B."/>
            <person name="Sperling S."/>
            <person name="Stupka E."/>
            <person name="Sugiura K."/>
            <person name="Sultana R."/>
            <person name="Takenaka Y."/>
            <person name="Taki K."/>
            <person name="Tammoja K."/>
            <person name="Tan S.L."/>
            <person name="Tang S."/>
            <person name="Taylor M.S."/>
            <person name="Tegner J."/>
            <person name="Teichmann S.A."/>
            <person name="Ueda H.R."/>
            <person name="van Nimwegen E."/>
            <person name="Verardo R."/>
            <person name="Wei C.L."/>
            <person name="Yagi K."/>
            <person name="Yamanishi H."/>
            <person name="Zabarovsky E."/>
            <person name="Zhu S."/>
            <person name="Zimmer A."/>
            <person name="Hide W."/>
            <person name="Bult C."/>
            <person name="Grimmond S.M."/>
            <person name="Teasdale R.D."/>
            <person name="Liu E.T."/>
            <person name="Brusic V."/>
            <person name="Quackenbush J."/>
            <person name="Wahlestedt C."/>
            <person name="Mattick J.S."/>
            <person name="Hume D.A."/>
            <person name="Kai C."/>
            <person name="Sasaki D."/>
            <person name="Tomaru Y."/>
            <person name="Fukuda S."/>
            <person name="Kanamori-Katayama M."/>
            <person name="Suzuki M."/>
            <person name="Aoki J."/>
            <person name="Arakawa T."/>
            <person name="Iida J."/>
            <person name="Imamura K."/>
            <person name="Itoh M."/>
            <person name="Kato T."/>
            <person name="Kawaji H."/>
            <person name="Kawagashira N."/>
            <person name="Kawashima T."/>
            <person name="Kojima M."/>
            <person name="Kondo S."/>
            <person name="Konno H."/>
            <person name="Nakano K."/>
            <person name="Ninomiya N."/>
            <person name="Nishio T."/>
            <person name="Okada M."/>
            <person name="Plessy C."/>
            <person name="Shibata K."/>
            <person name="Shiraki T."/>
            <person name="Suzuki S."/>
            <person name="Tagami M."/>
            <person name="Waki K."/>
            <person name="Watahiki A."/>
            <person name="Okamura-Oho Y."/>
            <person name="Suzuki H."/>
            <person name="Kawai J."/>
            <person name="Hayashizaki Y."/>
        </authorList>
    </citation>
    <scope>NUCLEOTIDE SEQUENCE [LARGE SCALE MRNA] (ISOFORM 1)</scope>
    <scope>NUCLEOTIDE SEQUENCE [LARGE SCALE MRNA] OF 1-397 (ISOFORM 2)</scope>
    <source>
        <strain>C57BL/6J</strain>
        <tissue>Brain cortex</tissue>
        <tissue>Embryonic heart</tissue>
        <tissue>Embryonic lung</tissue>
        <tissue>Spinal cord</tissue>
        <tissue>Vagina</tissue>
    </source>
</reference>
<reference key="2">
    <citation type="journal article" date="2004" name="Genome Res.">
        <title>The status, quality, and expansion of the NIH full-length cDNA project: the Mammalian Gene Collection (MGC).</title>
        <authorList>
            <consortium name="The MGC Project Team"/>
        </authorList>
    </citation>
    <scope>NUCLEOTIDE SEQUENCE [LARGE SCALE MRNA] (ISOFORM 1)</scope>
    <source>
        <strain>C57BL/6J</strain>
        <tissue>Eye</tissue>
    </source>
</reference>
<sequence>MTSLVPGAGLLPIPTSSPLTAVSSLGVSLSSLGAIPAAALDPNITTLGEIPQPPLMGNVDPSKIDEIRRTVYVGNLNSQTTTADQLLEFFKQVGEVKFVRMAGDETQPTRFAFVEFADQNSVPRALAFNGVMFGDRPLKINHSNNAIVKPPEMTPQAAAKELEEVMKRVREAQSFISAAIEPESGKSNERKGGRSRSHTRSKSRSSSKSHSRRKRSQSKHRSRSHNRSRSRQKDRRRSKSPHKKRSKSRERRKSRSRSRSRDKRKDTREKVKERVKEKEREKEREREKDREKDKERGKNKDKDREKEKDHEKERDKEKEKEQDKDKEREKDRSKETDEKRKKEKKSRTPPRSYNASRRSRSTSRERRRRRSRSSSRSPRTSKTVKRKSSRSPSPRGRNKKEKKREKERDHISDRRERERSTSTKKSSGDRDGKEKVEKSTTPVKEKEHSKESDATVSKAADEKGSPRTEDEGKVQHNGNCQPNEESPCSKADAV</sequence>
<gene>
    <name type="primary">Srek1</name>
    <name type="synonym">Sfrs12</name>
    <name type="synonym">Srrp86</name>
</gene>
<dbReference type="EMBL" id="AK033354">
    <property type="protein sequence ID" value="BAC28243.1"/>
    <property type="molecule type" value="mRNA"/>
</dbReference>
<dbReference type="EMBL" id="AK037115">
    <property type="protein sequence ID" value="BAC29709.2"/>
    <property type="molecule type" value="mRNA"/>
</dbReference>
<dbReference type="EMBL" id="AK039311">
    <property type="protein sequence ID" value="BAC30314.1"/>
    <property type="molecule type" value="mRNA"/>
</dbReference>
<dbReference type="EMBL" id="AK044086">
    <property type="protein sequence ID" value="BAC31767.1"/>
    <property type="molecule type" value="mRNA"/>
</dbReference>
<dbReference type="EMBL" id="AK052265">
    <property type="protein sequence ID" value="BAC34905.2"/>
    <property type="molecule type" value="mRNA"/>
</dbReference>
<dbReference type="EMBL" id="BC070460">
    <property type="protein sequence ID" value="AAH70460.1"/>
    <property type="molecule type" value="mRNA"/>
</dbReference>
<dbReference type="CCDS" id="CCDS26743.1">
    <molecule id="Q8BZX4-1"/>
</dbReference>
<dbReference type="CCDS" id="CCDS88513.1">
    <molecule id="Q8BZX4-2"/>
</dbReference>
<dbReference type="RefSeq" id="NP_001348014.1">
    <molecule id="Q8BZX4-2"/>
    <property type="nucleotide sequence ID" value="NM_001361085.2"/>
</dbReference>
<dbReference type="RefSeq" id="NP_001413423.1">
    <molecule id="Q8BZX4-1"/>
    <property type="nucleotide sequence ID" value="NM_001426494.1"/>
</dbReference>
<dbReference type="RefSeq" id="NP_001413424.1">
    <molecule id="Q8BZX4-1"/>
    <property type="nucleotide sequence ID" value="NM_001426495.1"/>
</dbReference>
<dbReference type="RefSeq" id="NP_766180.1">
    <molecule id="Q8BZX4-1"/>
    <property type="nucleotide sequence ID" value="NM_172592.4"/>
</dbReference>
<dbReference type="RefSeq" id="XP_006517669.1">
    <property type="nucleotide sequence ID" value="XM_006517606.2"/>
</dbReference>
<dbReference type="RefSeq" id="XP_006517670.1">
    <property type="nucleotide sequence ID" value="XM_006517607.3"/>
</dbReference>
<dbReference type="RefSeq" id="XP_017170986.1">
    <property type="nucleotide sequence ID" value="XM_017315497.1"/>
</dbReference>
<dbReference type="SMR" id="Q8BZX4"/>
<dbReference type="BioGRID" id="230045">
    <property type="interactions" value="2"/>
</dbReference>
<dbReference type="FunCoup" id="Q8BZX4">
    <property type="interactions" value="2044"/>
</dbReference>
<dbReference type="STRING" id="10090.ENSMUSP00000147737"/>
<dbReference type="GlyGen" id="Q8BZX4">
    <property type="glycosylation" value="3 sites, 1 N-linked glycan (1 site), 1 O-linked glycan (2 sites)"/>
</dbReference>
<dbReference type="iPTMnet" id="Q8BZX4"/>
<dbReference type="PhosphoSitePlus" id="Q8BZX4"/>
<dbReference type="PaxDb" id="10090-ENSMUSP00000074196"/>
<dbReference type="PeptideAtlas" id="Q8BZX4"/>
<dbReference type="ProteomicsDB" id="263341">
    <molecule id="Q8BZX4-1"/>
</dbReference>
<dbReference type="ProteomicsDB" id="263342">
    <molecule id="Q8BZX4-2"/>
</dbReference>
<dbReference type="Pumba" id="Q8BZX4"/>
<dbReference type="DNASU" id="218543"/>
<dbReference type="Ensembl" id="ENSMUST00000074616.7">
    <molecule id="Q8BZX4-2"/>
    <property type="protein sequence ID" value="ENSMUSP00000074196.7"/>
    <property type="gene ID" value="ENSMUSG00000032621.9"/>
</dbReference>
<dbReference type="Ensembl" id="ENSMUST00000210489.2">
    <molecule id="Q8BZX4-1"/>
    <property type="protein sequence ID" value="ENSMUSP00000147737.2"/>
    <property type="gene ID" value="ENSMUSG00000032621.9"/>
</dbReference>
<dbReference type="GeneID" id="218543"/>
<dbReference type="KEGG" id="mmu:218543"/>
<dbReference type="UCSC" id="uc007rsh.1">
    <molecule id="Q8BZX4-1"/>
    <property type="organism name" value="mouse"/>
</dbReference>
<dbReference type="UCSC" id="uc007rsj.1">
    <molecule id="Q8BZX4-2"/>
    <property type="organism name" value="mouse"/>
</dbReference>
<dbReference type="AGR" id="MGI:2145245"/>
<dbReference type="CTD" id="140890"/>
<dbReference type="MGI" id="MGI:2145245">
    <property type="gene designation" value="Srek1"/>
</dbReference>
<dbReference type="VEuPathDB" id="HostDB:ENSMUSG00000032621"/>
<dbReference type="eggNOG" id="KOG4676">
    <property type="taxonomic scope" value="Eukaryota"/>
</dbReference>
<dbReference type="GeneTree" id="ENSGT01030000235193"/>
<dbReference type="HOGENOM" id="CLU_030029_2_0_1"/>
<dbReference type="InParanoid" id="Q8BZX4"/>
<dbReference type="OMA" id="MYPADEF"/>
<dbReference type="PhylomeDB" id="Q8BZX4"/>
<dbReference type="TreeFam" id="TF106266"/>
<dbReference type="BioGRID-ORCS" id="218543">
    <property type="hits" value="9 hits in 78 CRISPR screens"/>
</dbReference>
<dbReference type="ChiTaRS" id="Srek1">
    <property type="organism name" value="mouse"/>
</dbReference>
<dbReference type="PRO" id="PR:Q8BZX4"/>
<dbReference type="Proteomes" id="UP000000589">
    <property type="component" value="Chromosome 13"/>
</dbReference>
<dbReference type="RNAct" id="Q8BZX4">
    <property type="molecule type" value="protein"/>
</dbReference>
<dbReference type="Bgee" id="ENSMUSG00000032621">
    <property type="expression patterns" value="Expressed in undifferentiated genital tubercle and 260 other cell types or tissues"/>
</dbReference>
<dbReference type="ExpressionAtlas" id="Q8BZX4">
    <property type="expression patterns" value="baseline and differential"/>
</dbReference>
<dbReference type="GO" id="GO:0005681">
    <property type="term" value="C:spliceosomal complex"/>
    <property type="evidence" value="ECO:0007669"/>
    <property type="project" value="UniProtKB-KW"/>
</dbReference>
<dbReference type="GO" id="GO:0003723">
    <property type="term" value="F:RNA binding"/>
    <property type="evidence" value="ECO:0007669"/>
    <property type="project" value="InterPro"/>
</dbReference>
<dbReference type="GO" id="GO:0006397">
    <property type="term" value="P:mRNA processing"/>
    <property type="evidence" value="ECO:0007669"/>
    <property type="project" value="UniProtKB-KW"/>
</dbReference>
<dbReference type="GO" id="GO:0008380">
    <property type="term" value="P:RNA splicing"/>
    <property type="evidence" value="ECO:0007669"/>
    <property type="project" value="UniProtKB-KW"/>
</dbReference>
<dbReference type="CDD" id="cd12260">
    <property type="entry name" value="RRM2_SREK1"/>
    <property type="match status" value="1"/>
</dbReference>
<dbReference type="FunFam" id="3.30.70.330:FF:000142">
    <property type="entry name" value="splicing regulatory glutamine/lysine-rich protein 1 isoform X1"/>
    <property type="match status" value="1"/>
</dbReference>
<dbReference type="Gene3D" id="3.30.70.330">
    <property type="match status" value="1"/>
</dbReference>
<dbReference type="InterPro" id="IPR012677">
    <property type="entry name" value="Nucleotide-bd_a/b_plait_sf"/>
</dbReference>
<dbReference type="InterPro" id="IPR035979">
    <property type="entry name" value="RBD_domain_sf"/>
</dbReference>
<dbReference type="InterPro" id="IPR000504">
    <property type="entry name" value="RRM_dom"/>
</dbReference>
<dbReference type="InterPro" id="IPR034192">
    <property type="entry name" value="SREK1_RRM2"/>
</dbReference>
<dbReference type="PANTHER" id="PTHR32343">
    <property type="entry name" value="SERINE/ARGININE-RICH SPLICING FACTOR"/>
    <property type="match status" value="1"/>
</dbReference>
<dbReference type="PANTHER" id="PTHR32343:SF71">
    <property type="entry name" value="SPLICING REGULATORY GLUTAMIC ACID AND LYSINE RICH PROTEIN 1"/>
    <property type="match status" value="1"/>
</dbReference>
<dbReference type="Pfam" id="PF00076">
    <property type="entry name" value="RRM_1"/>
    <property type="match status" value="1"/>
</dbReference>
<dbReference type="SMART" id="SM00360">
    <property type="entry name" value="RRM"/>
    <property type="match status" value="1"/>
</dbReference>
<dbReference type="SUPFAM" id="SSF54928">
    <property type="entry name" value="RNA-binding domain, RBD"/>
    <property type="match status" value="1"/>
</dbReference>
<dbReference type="PROSITE" id="PS50102">
    <property type="entry name" value="RRM"/>
    <property type="match status" value="1"/>
</dbReference>
<protein>
    <recommendedName>
        <fullName>Splicing regulatory glutamine/lysine-rich protein 1</fullName>
    </recommendedName>
    <alternativeName>
        <fullName>Serine/arginine-rich-splicing regulatory protein 86</fullName>
        <shortName>SRrp86</shortName>
    </alternativeName>
    <alternativeName>
        <fullName>Splicing factor, arginine/serine-rich 12</fullName>
    </alternativeName>
</protein>
<organism>
    <name type="scientific">Mus musculus</name>
    <name type="common">Mouse</name>
    <dbReference type="NCBI Taxonomy" id="10090"/>
    <lineage>
        <taxon>Eukaryota</taxon>
        <taxon>Metazoa</taxon>
        <taxon>Chordata</taxon>
        <taxon>Craniata</taxon>
        <taxon>Vertebrata</taxon>
        <taxon>Euteleostomi</taxon>
        <taxon>Mammalia</taxon>
        <taxon>Eutheria</taxon>
        <taxon>Euarchontoglires</taxon>
        <taxon>Glires</taxon>
        <taxon>Rodentia</taxon>
        <taxon>Myomorpha</taxon>
        <taxon>Muroidea</taxon>
        <taxon>Muridae</taxon>
        <taxon>Murinae</taxon>
        <taxon>Mus</taxon>
        <taxon>Mus</taxon>
    </lineage>
</organism>
<accession>Q8BZX4</accession>
<accession>Q8BLM8</accession>
<accession>Q8BWK7</accession>
<accession>Q8BYK0</accession>
<accession>Q8BYZ4</accession>
<keyword id="KW-0025">Alternative splicing</keyword>
<keyword id="KW-1017">Isopeptide bond</keyword>
<keyword id="KW-0507">mRNA processing</keyword>
<keyword id="KW-0508">mRNA splicing</keyword>
<keyword id="KW-0539">Nucleus</keyword>
<keyword id="KW-0597">Phosphoprotein</keyword>
<keyword id="KW-1185">Reference proteome</keyword>
<keyword id="KW-0747">Spliceosome</keyword>
<keyword id="KW-0832">Ubl conjugation</keyword>
<feature type="chain" id="PRO_0000081941" description="Splicing regulatory glutamine/lysine-rich protein 1">
    <location>
        <begin position="1"/>
        <end position="494"/>
    </location>
</feature>
<feature type="domain" description="RRM" evidence="3">
    <location>
        <begin position="69"/>
        <end position="145"/>
    </location>
</feature>
<feature type="region of interest" description="Disordered" evidence="4">
    <location>
        <begin position="176"/>
        <end position="494"/>
    </location>
</feature>
<feature type="compositionally biased region" description="Basic and acidic residues" evidence="4">
    <location>
        <begin position="183"/>
        <end position="192"/>
    </location>
</feature>
<feature type="compositionally biased region" description="Basic residues" evidence="4">
    <location>
        <begin position="193"/>
        <end position="262"/>
    </location>
</feature>
<feature type="compositionally biased region" description="Basic and acidic residues" evidence="4">
    <location>
        <begin position="263"/>
        <end position="340"/>
    </location>
</feature>
<feature type="compositionally biased region" description="Basic residues" evidence="4">
    <location>
        <begin position="357"/>
        <end position="373"/>
    </location>
</feature>
<feature type="compositionally biased region" description="Basic and acidic residues" evidence="4">
    <location>
        <begin position="404"/>
        <end position="474"/>
    </location>
</feature>
<feature type="compositionally biased region" description="Polar residues" evidence="4">
    <location>
        <begin position="476"/>
        <end position="486"/>
    </location>
</feature>
<feature type="modified residue" description="Phosphoserine" evidence="2">
    <location>
        <position position="174"/>
    </location>
</feature>
<feature type="modified residue" description="Phosphoserine" evidence="2">
    <location>
        <position position="187"/>
    </location>
</feature>
<feature type="modified residue" description="Phosphothreonine" evidence="2">
    <location>
        <position position="348"/>
    </location>
</feature>
<feature type="cross-link" description="Glycyl lysine isopeptide (Lys-Gly) (interchain with G-Cter in SUMO2)" evidence="2">
    <location>
        <position position="490"/>
    </location>
</feature>
<feature type="splice variant" id="VSP_008400" description="In isoform 2." evidence="5">
    <original>M</original>
    <variation>MNSGGGFGLGLGFGLFPTTVIQVTNLSSAVTSEQMRTLFSFLGEIEELRLYPPDNTPLAFSSKVCYIKFRDPSSVGVAQHLTNTVFIDRALIVVPCAEGKIPEEAKALSLLAPAPTM</variation>
    <location>
        <position position="1"/>
    </location>
</feature>
<feature type="sequence conflict" description="In Ref. 1; BAC29709." evidence="6" ref="1">
    <original>E</original>
    <variation>G</variation>
    <location>
        <position position="401"/>
    </location>
</feature>
<evidence type="ECO:0000250" key="1"/>
<evidence type="ECO:0000250" key="2">
    <source>
        <dbReference type="UniProtKB" id="Q8WXA9"/>
    </source>
</evidence>
<evidence type="ECO:0000255" key="3">
    <source>
        <dbReference type="PROSITE-ProRule" id="PRU00176"/>
    </source>
</evidence>
<evidence type="ECO:0000256" key="4">
    <source>
        <dbReference type="SAM" id="MobiDB-lite"/>
    </source>
</evidence>
<evidence type="ECO:0000303" key="5">
    <source>
    </source>
</evidence>
<evidence type="ECO:0000305" key="6"/>
<name>SREK1_MOUSE</name>
<comment type="function">
    <text evidence="1">Participates in the regulation of alternative splicing by modulating the activity of other splice facors. Inhibits the splicing activity of SFRS1, SFRS2 and SFRS6. Augments the splicing activity of SFRS3 (By similarity).</text>
</comment>
<comment type="subunit">
    <text evidence="1">Homodimer. Binds SFRS1, SFRS2, SFRS3 and SFRS6. Interacts with the spliceosome. Interacts with SREK1IP1 (By similarity).</text>
</comment>
<comment type="subcellular location">
    <subcellularLocation>
        <location evidence="1">Nucleus</location>
    </subcellularLocation>
</comment>
<comment type="alternative products">
    <event type="alternative splicing"/>
    <isoform>
        <id>Q8BZX4-1</id>
        <name>1</name>
        <sequence type="displayed"/>
    </isoform>
    <isoform>
        <id>Q8BZX4-2</id>
        <name>2</name>
        <sequence type="described" ref="VSP_008400"/>
    </isoform>
</comment>
<comment type="similarity">
    <text evidence="6">Belongs to the splicing factor SR family.</text>
</comment>
<proteinExistence type="evidence at transcript level"/>